<comment type="function">
    <text evidence="1">Required for normal Golgi function.</text>
</comment>
<comment type="subunit">
    <text evidence="1">Component of the conserved oligomeric Golgi complex which is composed of eight different subunits and is required for normal Golgi morphology and localization.</text>
</comment>
<comment type="subcellular location">
    <subcellularLocation>
        <location evidence="1">Golgi apparatus membrane</location>
        <topology evidence="1">Peripheral membrane protein</topology>
    </subcellularLocation>
</comment>
<comment type="similarity">
    <text evidence="2">Belongs to the COG7 family.</text>
</comment>
<organism>
    <name type="scientific">Drosophila melanogaster</name>
    <name type="common">Fruit fly</name>
    <dbReference type="NCBI Taxonomy" id="7227"/>
    <lineage>
        <taxon>Eukaryota</taxon>
        <taxon>Metazoa</taxon>
        <taxon>Ecdysozoa</taxon>
        <taxon>Arthropoda</taxon>
        <taxon>Hexapoda</taxon>
        <taxon>Insecta</taxon>
        <taxon>Pterygota</taxon>
        <taxon>Neoptera</taxon>
        <taxon>Endopterygota</taxon>
        <taxon>Diptera</taxon>
        <taxon>Brachycera</taxon>
        <taxon>Muscomorpha</taxon>
        <taxon>Ephydroidea</taxon>
        <taxon>Drosophilidae</taxon>
        <taxon>Drosophila</taxon>
        <taxon>Sophophora</taxon>
    </lineage>
</organism>
<feature type="chain" id="PRO_0000213519" description="Conserved oligomeric Golgi complex subunit 7">
    <location>
        <begin position="1"/>
        <end position="742"/>
    </location>
</feature>
<proteinExistence type="evidence at transcript level"/>
<keyword id="KW-0333">Golgi apparatus</keyword>
<keyword id="KW-0472">Membrane</keyword>
<keyword id="KW-0653">Protein transport</keyword>
<keyword id="KW-1185">Reference proteome</keyword>
<keyword id="KW-0813">Transport</keyword>
<name>COG7_DROME</name>
<accession>Q9VAD6</accession>
<accession>Q8SZV9</accession>
<reference key="1">
    <citation type="journal article" date="2000" name="Science">
        <title>The genome sequence of Drosophila melanogaster.</title>
        <authorList>
            <person name="Adams M.D."/>
            <person name="Celniker S.E."/>
            <person name="Holt R.A."/>
            <person name="Evans C.A."/>
            <person name="Gocayne J.D."/>
            <person name="Amanatides P.G."/>
            <person name="Scherer S.E."/>
            <person name="Li P.W."/>
            <person name="Hoskins R.A."/>
            <person name="Galle R.F."/>
            <person name="George R.A."/>
            <person name="Lewis S.E."/>
            <person name="Richards S."/>
            <person name="Ashburner M."/>
            <person name="Henderson S.N."/>
            <person name="Sutton G.G."/>
            <person name="Wortman J.R."/>
            <person name="Yandell M.D."/>
            <person name="Zhang Q."/>
            <person name="Chen L.X."/>
            <person name="Brandon R.C."/>
            <person name="Rogers Y.-H.C."/>
            <person name="Blazej R.G."/>
            <person name="Champe M."/>
            <person name="Pfeiffer B.D."/>
            <person name="Wan K.H."/>
            <person name="Doyle C."/>
            <person name="Baxter E.G."/>
            <person name="Helt G."/>
            <person name="Nelson C.R."/>
            <person name="Miklos G.L.G."/>
            <person name="Abril J.F."/>
            <person name="Agbayani A."/>
            <person name="An H.-J."/>
            <person name="Andrews-Pfannkoch C."/>
            <person name="Baldwin D."/>
            <person name="Ballew R.M."/>
            <person name="Basu A."/>
            <person name="Baxendale J."/>
            <person name="Bayraktaroglu L."/>
            <person name="Beasley E.M."/>
            <person name="Beeson K.Y."/>
            <person name="Benos P.V."/>
            <person name="Berman B.P."/>
            <person name="Bhandari D."/>
            <person name="Bolshakov S."/>
            <person name="Borkova D."/>
            <person name="Botchan M.R."/>
            <person name="Bouck J."/>
            <person name="Brokstein P."/>
            <person name="Brottier P."/>
            <person name="Burtis K.C."/>
            <person name="Busam D.A."/>
            <person name="Butler H."/>
            <person name="Cadieu E."/>
            <person name="Center A."/>
            <person name="Chandra I."/>
            <person name="Cherry J.M."/>
            <person name="Cawley S."/>
            <person name="Dahlke C."/>
            <person name="Davenport L.B."/>
            <person name="Davies P."/>
            <person name="de Pablos B."/>
            <person name="Delcher A."/>
            <person name="Deng Z."/>
            <person name="Mays A.D."/>
            <person name="Dew I."/>
            <person name="Dietz S.M."/>
            <person name="Dodson K."/>
            <person name="Doup L.E."/>
            <person name="Downes M."/>
            <person name="Dugan-Rocha S."/>
            <person name="Dunkov B.C."/>
            <person name="Dunn P."/>
            <person name="Durbin K.J."/>
            <person name="Evangelista C.C."/>
            <person name="Ferraz C."/>
            <person name="Ferriera S."/>
            <person name="Fleischmann W."/>
            <person name="Fosler C."/>
            <person name="Gabrielian A.E."/>
            <person name="Garg N.S."/>
            <person name="Gelbart W.M."/>
            <person name="Glasser K."/>
            <person name="Glodek A."/>
            <person name="Gong F."/>
            <person name="Gorrell J.H."/>
            <person name="Gu Z."/>
            <person name="Guan P."/>
            <person name="Harris M."/>
            <person name="Harris N.L."/>
            <person name="Harvey D.A."/>
            <person name="Heiman T.J."/>
            <person name="Hernandez J.R."/>
            <person name="Houck J."/>
            <person name="Hostin D."/>
            <person name="Houston K.A."/>
            <person name="Howland T.J."/>
            <person name="Wei M.-H."/>
            <person name="Ibegwam C."/>
            <person name="Jalali M."/>
            <person name="Kalush F."/>
            <person name="Karpen G.H."/>
            <person name="Ke Z."/>
            <person name="Kennison J.A."/>
            <person name="Ketchum K.A."/>
            <person name="Kimmel B.E."/>
            <person name="Kodira C.D."/>
            <person name="Kraft C.L."/>
            <person name="Kravitz S."/>
            <person name="Kulp D."/>
            <person name="Lai Z."/>
            <person name="Lasko P."/>
            <person name="Lei Y."/>
            <person name="Levitsky A.A."/>
            <person name="Li J.H."/>
            <person name="Li Z."/>
            <person name="Liang Y."/>
            <person name="Lin X."/>
            <person name="Liu X."/>
            <person name="Mattei B."/>
            <person name="McIntosh T.C."/>
            <person name="McLeod M.P."/>
            <person name="McPherson D."/>
            <person name="Merkulov G."/>
            <person name="Milshina N.V."/>
            <person name="Mobarry C."/>
            <person name="Morris J."/>
            <person name="Moshrefi A."/>
            <person name="Mount S.M."/>
            <person name="Moy M."/>
            <person name="Murphy B."/>
            <person name="Murphy L."/>
            <person name="Muzny D.M."/>
            <person name="Nelson D.L."/>
            <person name="Nelson D.R."/>
            <person name="Nelson K.A."/>
            <person name="Nixon K."/>
            <person name="Nusskern D.R."/>
            <person name="Pacleb J.M."/>
            <person name="Palazzolo M."/>
            <person name="Pittman G.S."/>
            <person name="Pan S."/>
            <person name="Pollard J."/>
            <person name="Puri V."/>
            <person name="Reese M.G."/>
            <person name="Reinert K."/>
            <person name="Remington K."/>
            <person name="Saunders R.D.C."/>
            <person name="Scheeler F."/>
            <person name="Shen H."/>
            <person name="Shue B.C."/>
            <person name="Siden-Kiamos I."/>
            <person name="Simpson M."/>
            <person name="Skupski M.P."/>
            <person name="Smith T.J."/>
            <person name="Spier E."/>
            <person name="Spradling A.C."/>
            <person name="Stapleton M."/>
            <person name="Strong R."/>
            <person name="Sun E."/>
            <person name="Svirskas R."/>
            <person name="Tector C."/>
            <person name="Turner R."/>
            <person name="Venter E."/>
            <person name="Wang A.H."/>
            <person name="Wang X."/>
            <person name="Wang Z.-Y."/>
            <person name="Wassarman D.A."/>
            <person name="Weinstock G.M."/>
            <person name="Weissenbach J."/>
            <person name="Williams S.M."/>
            <person name="Woodage T."/>
            <person name="Worley K.C."/>
            <person name="Wu D."/>
            <person name="Yang S."/>
            <person name="Yao Q.A."/>
            <person name="Ye J."/>
            <person name="Yeh R.-F."/>
            <person name="Zaveri J.S."/>
            <person name="Zhan M."/>
            <person name="Zhang G."/>
            <person name="Zhao Q."/>
            <person name="Zheng L."/>
            <person name="Zheng X.H."/>
            <person name="Zhong F.N."/>
            <person name="Zhong W."/>
            <person name="Zhou X."/>
            <person name="Zhu S.C."/>
            <person name="Zhu X."/>
            <person name="Smith H.O."/>
            <person name="Gibbs R.A."/>
            <person name="Myers E.W."/>
            <person name="Rubin G.M."/>
            <person name="Venter J.C."/>
        </authorList>
    </citation>
    <scope>NUCLEOTIDE SEQUENCE [LARGE SCALE GENOMIC DNA]</scope>
    <source>
        <strain>Berkeley</strain>
    </source>
</reference>
<reference key="2">
    <citation type="journal article" date="2002" name="Genome Biol.">
        <title>Annotation of the Drosophila melanogaster euchromatic genome: a systematic review.</title>
        <authorList>
            <person name="Misra S."/>
            <person name="Crosby M.A."/>
            <person name="Mungall C.J."/>
            <person name="Matthews B.B."/>
            <person name="Campbell K.S."/>
            <person name="Hradecky P."/>
            <person name="Huang Y."/>
            <person name="Kaminker J.S."/>
            <person name="Millburn G.H."/>
            <person name="Prochnik S.E."/>
            <person name="Smith C.D."/>
            <person name="Tupy J.L."/>
            <person name="Whitfield E.J."/>
            <person name="Bayraktaroglu L."/>
            <person name="Berman B.P."/>
            <person name="Bettencourt B.R."/>
            <person name="Celniker S.E."/>
            <person name="de Grey A.D.N.J."/>
            <person name="Drysdale R.A."/>
            <person name="Harris N.L."/>
            <person name="Richter J."/>
            <person name="Russo S."/>
            <person name="Schroeder A.J."/>
            <person name="Shu S.Q."/>
            <person name="Stapleton M."/>
            <person name="Yamada C."/>
            <person name="Ashburner M."/>
            <person name="Gelbart W.M."/>
            <person name="Rubin G.M."/>
            <person name="Lewis S.E."/>
        </authorList>
    </citation>
    <scope>GENOME REANNOTATION</scope>
    <source>
        <strain>Berkeley</strain>
    </source>
</reference>
<reference key="3">
    <citation type="journal article" date="2002" name="Genome Biol.">
        <title>A Drosophila full-length cDNA resource.</title>
        <authorList>
            <person name="Stapleton M."/>
            <person name="Carlson J.W."/>
            <person name="Brokstein P."/>
            <person name="Yu C."/>
            <person name="Champe M."/>
            <person name="George R.A."/>
            <person name="Guarin H."/>
            <person name="Kronmiller B."/>
            <person name="Pacleb J.M."/>
            <person name="Park S."/>
            <person name="Wan K.H."/>
            <person name="Rubin G.M."/>
            <person name="Celniker S.E."/>
        </authorList>
    </citation>
    <scope>NUCLEOTIDE SEQUENCE [LARGE SCALE MRNA]</scope>
    <source>
        <strain>Berkeley</strain>
        <tissue>Embryo</tissue>
    </source>
</reference>
<evidence type="ECO:0000250" key="1">
    <source>
        <dbReference type="UniProtKB" id="P83436"/>
    </source>
</evidence>
<evidence type="ECO:0000305" key="2"/>
<gene>
    <name type="primary">Cog7</name>
    <name type="ORF">CG31040</name>
</gene>
<sequence length="742" mass="84076">MDVSALSETTFSPAEWINANYKKFVEENGRDDSEAASAFIRSYVAKLQLYIFNVNNAVEESSRQVVASMPRIAKESAALQADVHRLQEKMSAMRLEVAAVQSETGECMATLERLNTKSQKLQVAKESLQESDGWGNLLAELEDGFERNDLKGVCDKLIALQKSLHAQEQLPGHAERQTQVEDFKNRLEALASPSVVQCFAEGNTEQAQHFVQIFTSIQRLPQLQQYYRAVQKNFWQQQWKQTLELQGTESQPQQQQFLTLYYDQLLEHCQRQVKWCSNLFGENSPQPFLVIAELLPALQPTRDAHILQLLKTSNERLEMLALFAKVNHSFVLHLNSLLEQSHITLSEELHRLLGEAIFEYFHKFIQQYPRLEETQLSTQVDRLSSNQATPSDGVRHLEESTRKLYEWLKEACERCASITSDLALCKLITLLNGIFKRQLESFGRIQRQIGLSLGSSSYAAQSENWSLLQYTMSQLQCLADFQVQLHQFEQDLHTRMVMLSNRLTKPSNRGPITIFQTCDHAARTQLLNSIADYQQKKSEATDSLGIFPQIYATLKSHFADTHDITLNILLQPIETHLAHIRPPVQDHAASGIEMPSFSFAPQESITQIGQYLLTLPQHLEPLLLSPSSLLKQALEVCNIKYTQAIPCADVLLSLVVEQCCVLYVTQILQIKSLPSSAATQLSVDIEYLSNVLEELGLSINLQLSQILTLLKAAPDQYLTLSSGCEPRLVTAIRQMRNIISTQ</sequence>
<protein>
    <recommendedName>
        <fullName>Conserved oligomeric Golgi complex subunit 7</fullName>
        <shortName>COG complex subunit 7</shortName>
    </recommendedName>
    <alternativeName>
        <fullName>Component of oligomeric Golgi complex 7</fullName>
    </alternativeName>
</protein>
<dbReference type="EMBL" id="AE014297">
    <property type="protein sequence ID" value="AAF56975.2"/>
    <property type="molecule type" value="Genomic_DNA"/>
</dbReference>
<dbReference type="EMBL" id="AY069758">
    <property type="protein sequence ID" value="AAL39903.1"/>
    <property type="molecule type" value="mRNA"/>
</dbReference>
<dbReference type="RefSeq" id="NP_651750.1">
    <property type="nucleotide sequence ID" value="NM_143493.3"/>
</dbReference>
<dbReference type="SMR" id="Q9VAD6"/>
<dbReference type="BioGRID" id="68404">
    <property type="interactions" value="5"/>
</dbReference>
<dbReference type="ComplexPortal" id="CPX-2794">
    <property type="entry name" value="COG tethering complex"/>
</dbReference>
<dbReference type="DIP" id="DIP-23137N"/>
<dbReference type="FunCoup" id="Q9VAD6">
    <property type="interactions" value="852"/>
</dbReference>
<dbReference type="IntAct" id="Q9VAD6">
    <property type="interactions" value="1"/>
</dbReference>
<dbReference type="STRING" id="7227.FBpp0084875"/>
<dbReference type="GlyGen" id="Q9VAD6">
    <property type="glycosylation" value="1 site"/>
</dbReference>
<dbReference type="PaxDb" id="7227-FBpp0084875"/>
<dbReference type="DNASU" id="43547"/>
<dbReference type="EnsemblMetazoa" id="FBtr0085509">
    <property type="protein sequence ID" value="FBpp0084875"/>
    <property type="gene ID" value="FBgn0051040"/>
</dbReference>
<dbReference type="GeneID" id="43547"/>
<dbReference type="KEGG" id="dme:Dmel_CG31040"/>
<dbReference type="UCSC" id="CG31040-RA">
    <property type="organism name" value="d. melanogaster"/>
</dbReference>
<dbReference type="AGR" id="FB:FBgn0051040"/>
<dbReference type="CTD" id="91949"/>
<dbReference type="FlyBase" id="FBgn0051040">
    <property type="gene designation" value="Cog7"/>
</dbReference>
<dbReference type="VEuPathDB" id="VectorBase:FBgn0051040"/>
<dbReference type="eggNOG" id="KOG4182">
    <property type="taxonomic scope" value="Eukaryota"/>
</dbReference>
<dbReference type="GeneTree" id="ENSGT00390000001260"/>
<dbReference type="HOGENOM" id="CLU_006044_2_0_1"/>
<dbReference type="InParanoid" id="Q9VAD6"/>
<dbReference type="OMA" id="LKYYHNC"/>
<dbReference type="OrthoDB" id="245173at2759"/>
<dbReference type="PhylomeDB" id="Q9VAD6"/>
<dbReference type="Reactome" id="R-DME-6807878">
    <property type="pathway name" value="COPI-mediated anterograde transport"/>
</dbReference>
<dbReference type="Reactome" id="R-DME-6811438">
    <property type="pathway name" value="Intra-Golgi traffic"/>
</dbReference>
<dbReference type="Reactome" id="R-DME-6811440">
    <property type="pathway name" value="Retrograde transport at the Trans-Golgi-Network"/>
</dbReference>
<dbReference type="SignaLink" id="Q9VAD6"/>
<dbReference type="BioGRID-ORCS" id="43547">
    <property type="hits" value="0 hits in 1 CRISPR screen"/>
</dbReference>
<dbReference type="GenomeRNAi" id="43547"/>
<dbReference type="PRO" id="PR:Q9VAD6"/>
<dbReference type="Proteomes" id="UP000000803">
    <property type="component" value="Chromosome 3R"/>
</dbReference>
<dbReference type="Bgee" id="FBgn0051040">
    <property type="expression patterns" value="Expressed in adult Malpighian tubule principal cell of lower segment in Malpighian tubule and 64 other cell types or tissues"/>
</dbReference>
<dbReference type="ExpressionAtlas" id="Q9VAD6">
    <property type="expression patterns" value="baseline and differential"/>
</dbReference>
<dbReference type="GO" id="GO:0036063">
    <property type="term" value="C:acroblast"/>
    <property type="evidence" value="ECO:0000314"/>
    <property type="project" value="FlyBase"/>
</dbReference>
<dbReference type="GO" id="GO:0005794">
    <property type="term" value="C:Golgi apparatus"/>
    <property type="evidence" value="ECO:0000314"/>
    <property type="project" value="FlyBase"/>
</dbReference>
<dbReference type="GO" id="GO:0000139">
    <property type="term" value="C:Golgi membrane"/>
    <property type="evidence" value="ECO:0007669"/>
    <property type="project" value="UniProtKB-SubCell"/>
</dbReference>
<dbReference type="GO" id="GO:0017119">
    <property type="term" value="C:Golgi transport complex"/>
    <property type="evidence" value="ECO:0000314"/>
    <property type="project" value="FlyBase"/>
</dbReference>
<dbReference type="GO" id="GO:0000916">
    <property type="term" value="P:actomyosin contractile ring contraction"/>
    <property type="evidence" value="ECO:0000315"/>
    <property type="project" value="FlyBase"/>
</dbReference>
<dbReference type="GO" id="GO:0007030">
    <property type="term" value="P:Golgi organization"/>
    <property type="evidence" value="ECO:0000315"/>
    <property type="project" value="FlyBase"/>
</dbReference>
<dbReference type="GO" id="GO:0006891">
    <property type="term" value="P:intra-Golgi vesicle-mediated transport"/>
    <property type="evidence" value="ECO:0000250"/>
    <property type="project" value="FlyBase"/>
</dbReference>
<dbReference type="GO" id="GO:0006886">
    <property type="term" value="P:intracellular protein transport"/>
    <property type="evidence" value="ECO:0007669"/>
    <property type="project" value="InterPro"/>
</dbReference>
<dbReference type="GO" id="GO:0007112">
    <property type="term" value="P:male meiosis cytokinesis"/>
    <property type="evidence" value="ECO:0000315"/>
    <property type="project" value="FlyBase"/>
</dbReference>
<dbReference type="GO" id="GO:1903292">
    <property type="term" value="P:protein localization to Golgi membrane"/>
    <property type="evidence" value="ECO:0000314"/>
    <property type="project" value="FlyBase"/>
</dbReference>
<dbReference type="GO" id="GO:0006890">
    <property type="term" value="P:retrograde vesicle-mediated transport, Golgi to endoplasmic reticulum"/>
    <property type="evidence" value="ECO:0000318"/>
    <property type="project" value="GO_Central"/>
</dbReference>
<dbReference type="InterPro" id="IPR019335">
    <property type="entry name" value="COG7"/>
</dbReference>
<dbReference type="PANTHER" id="PTHR21443">
    <property type="entry name" value="CONSERVED OLIGOMERIC GOLGI COMPLEX COMPONENT 7"/>
    <property type="match status" value="1"/>
</dbReference>
<dbReference type="PANTHER" id="PTHR21443:SF0">
    <property type="entry name" value="CONSERVED OLIGOMERIC GOLGI COMPLEX SUBUNIT 7"/>
    <property type="match status" value="1"/>
</dbReference>
<dbReference type="Pfam" id="PF10191">
    <property type="entry name" value="COG7"/>
    <property type="match status" value="1"/>
</dbReference>